<sequence>MDSLQNHLLIAMPSLKDTFFERSVIYLCEHNEQGAMGLMINRPIGVDVNELLRQMELDDFHTIESINSKVLVGGPVGQEKGFVLHTPQPQWSNSQQISDDLMLTTSRDVLTSLGSKEAPEQFIVALGYAGWGRHQLEQELADNTWLSIPANIDLMFNTDHESRWQKATESLGFDIWQLSSQAGHA</sequence>
<evidence type="ECO:0000255" key="1">
    <source>
        <dbReference type="HAMAP-Rule" id="MF_00758"/>
    </source>
</evidence>
<name>Y1144_SHELP</name>
<organism>
    <name type="scientific">Shewanella loihica (strain ATCC BAA-1088 / PV-4)</name>
    <dbReference type="NCBI Taxonomy" id="323850"/>
    <lineage>
        <taxon>Bacteria</taxon>
        <taxon>Pseudomonadati</taxon>
        <taxon>Pseudomonadota</taxon>
        <taxon>Gammaproteobacteria</taxon>
        <taxon>Alteromonadales</taxon>
        <taxon>Shewanellaceae</taxon>
        <taxon>Shewanella</taxon>
    </lineage>
</organism>
<comment type="similarity">
    <text evidence="1">Belongs to the UPF0301 (AlgH) family.</text>
</comment>
<dbReference type="EMBL" id="CP000606">
    <property type="protein sequence ID" value="ABO23015.1"/>
    <property type="molecule type" value="Genomic_DNA"/>
</dbReference>
<dbReference type="RefSeq" id="WP_011864947.1">
    <property type="nucleotide sequence ID" value="NC_009092.1"/>
</dbReference>
<dbReference type="SMR" id="A3QC17"/>
<dbReference type="STRING" id="323850.Shew_1144"/>
<dbReference type="KEGG" id="slo:Shew_1144"/>
<dbReference type="eggNOG" id="COG1678">
    <property type="taxonomic scope" value="Bacteria"/>
</dbReference>
<dbReference type="HOGENOM" id="CLU_057596_1_0_6"/>
<dbReference type="OrthoDB" id="9807486at2"/>
<dbReference type="Proteomes" id="UP000001558">
    <property type="component" value="Chromosome"/>
</dbReference>
<dbReference type="GO" id="GO:0005829">
    <property type="term" value="C:cytosol"/>
    <property type="evidence" value="ECO:0007669"/>
    <property type="project" value="TreeGrafter"/>
</dbReference>
<dbReference type="Gene3D" id="3.40.1740.10">
    <property type="entry name" value="VC0467-like"/>
    <property type="match status" value="1"/>
</dbReference>
<dbReference type="HAMAP" id="MF_00758">
    <property type="entry name" value="UPF0301"/>
    <property type="match status" value="1"/>
</dbReference>
<dbReference type="InterPro" id="IPR003774">
    <property type="entry name" value="AlgH-like"/>
</dbReference>
<dbReference type="NCBIfam" id="NF001266">
    <property type="entry name" value="PRK00228.1-1"/>
    <property type="match status" value="1"/>
</dbReference>
<dbReference type="PANTHER" id="PTHR30327">
    <property type="entry name" value="UNCHARACTERIZED PROTEIN YQGE"/>
    <property type="match status" value="1"/>
</dbReference>
<dbReference type="PANTHER" id="PTHR30327:SF1">
    <property type="entry name" value="UPF0301 PROTEIN YQGE"/>
    <property type="match status" value="1"/>
</dbReference>
<dbReference type="Pfam" id="PF02622">
    <property type="entry name" value="DUF179"/>
    <property type="match status" value="1"/>
</dbReference>
<dbReference type="SUPFAM" id="SSF143456">
    <property type="entry name" value="VC0467-like"/>
    <property type="match status" value="1"/>
</dbReference>
<gene>
    <name type="ordered locus">Shew_1144</name>
</gene>
<feature type="chain" id="PRO_1000046681" description="UPF0301 protein Shew_1144">
    <location>
        <begin position="1"/>
        <end position="185"/>
    </location>
</feature>
<proteinExistence type="inferred from homology"/>
<protein>
    <recommendedName>
        <fullName evidence="1">UPF0301 protein Shew_1144</fullName>
    </recommendedName>
</protein>
<keyword id="KW-1185">Reference proteome</keyword>
<reference key="1">
    <citation type="submission" date="2007-03" db="EMBL/GenBank/DDBJ databases">
        <title>Complete sequence of Shewanella loihica PV-4.</title>
        <authorList>
            <consortium name="US DOE Joint Genome Institute"/>
            <person name="Copeland A."/>
            <person name="Lucas S."/>
            <person name="Lapidus A."/>
            <person name="Barry K."/>
            <person name="Detter J.C."/>
            <person name="Glavina del Rio T."/>
            <person name="Hammon N."/>
            <person name="Israni S."/>
            <person name="Dalin E."/>
            <person name="Tice H."/>
            <person name="Pitluck S."/>
            <person name="Chain P."/>
            <person name="Malfatti S."/>
            <person name="Shin M."/>
            <person name="Vergez L."/>
            <person name="Schmutz J."/>
            <person name="Larimer F."/>
            <person name="Land M."/>
            <person name="Hauser L."/>
            <person name="Kyrpides N."/>
            <person name="Mikhailova N."/>
            <person name="Romine M.F."/>
            <person name="Serres G."/>
            <person name="Fredrickson J."/>
            <person name="Tiedje J."/>
            <person name="Richardson P."/>
        </authorList>
    </citation>
    <scope>NUCLEOTIDE SEQUENCE [LARGE SCALE GENOMIC DNA]</scope>
    <source>
        <strain>ATCC BAA-1088 / PV-4</strain>
    </source>
</reference>
<accession>A3QC17</accession>